<name>ART10_YEAS6</name>
<organism>
    <name type="scientific">Saccharomyces cerevisiae (strain AWRI1631)</name>
    <name type="common">Baker's yeast</name>
    <dbReference type="NCBI Taxonomy" id="545124"/>
    <lineage>
        <taxon>Eukaryota</taxon>
        <taxon>Fungi</taxon>
        <taxon>Dikarya</taxon>
        <taxon>Ascomycota</taxon>
        <taxon>Saccharomycotina</taxon>
        <taxon>Saccharomycetes</taxon>
        <taxon>Saccharomycetales</taxon>
        <taxon>Saccharomycetaceae</taxon>
        <taxon>Saccharomyces</taxon>
    </lineage>
</organism>
<accession>B5VNS9</accession>
<protein>
    <recommendedName>
        <fullName>Arrestin-related trafficking adapter 10</fullName>
    </recommendedName>
</protein>
<comment type="function">
    <text evidence="1">May regulate endocytosis by recruiting RSP5 ubiquitin ligase activity to specific plasma membrane proteins in response to extracellular stimuli.</text>
</comment>
<comment type="subunit">
    <text evidence="1">Interacts with RSP5.</text>
</comment>
<comment type="subcellular location">
    <subcellularLocation>
        <location evidence="1">Cytoplasm</location>
    </subcellularLocation>
</comment>
<comment type="PTM">
    <text evidence="1">Ubiquitinated by RSP5.</text>
</comment>
<comment type="similarity">
    <text evidence="3">Belongs to the ART10 family.</text>
</comment>
<reference key="1">
    <citation type="journal article" date="2008" name="FEMS Yeast Res.">
        <title>Comparative genome analysis of a Saccharomyces cerevisiae wine strain.</title>
        <authorList>
            <person name="Borneman A.R."/>
            <person name="Forgan A.H."/>
            <person name="Pretorius I.S."/>
            <person name="Chambers P.J."/>
        </authorList>
    </citation>
    <scope>NUCLEOTIDE SEQUENCE [LARGE SCALE GENOMIC DNA]</scope>
    <source>
        <strain>AWRI1631</strain>
    </source>
</reference>
<keyword id="KW-0963">Cytoplasm</keyword>
<keyword id="KW-0254">Endocytosis</keyword>
<keyword id="KW-1017">Isopeptide bond</keyword>
<keyword id="KW-0832">Ubl conjugation</keyword>
<sequence>MAPKISISLNPPYNGEFYSSNDQMSGIVSLQLTKALSIRKISVILKGFSETLTKIDQEYMFQQNGMMMPGQDNKSFHTLMKFEQRVFPPDNVWNALDGSSKPFKVKPGSYNYSFQFDKFPRKPECLKNHTAKTVAFVTRNNARLPPTFNSHWQEFNKIDNLDLYFYSFGKVIYMVQVQIELGKSSSWFKPFHKLIREIETFEFIPEPKDLIVEPDEDDNEELNAFSNNSRGNSLVTNNEFFNSSNLKVPSKDVKVVNGVGYIKSDRNFSQANSILIENGDIRSRPVSSVTSTRQSTRLVNGMKVFPSTYKMGLPDGESNMRIEVRSRDLKQIYRKDYLFRSGSQNFDKVYVVMEGNIASLSKMQITPLKLQLNLLETTTYLSQGIANGNYSSLKLIEIDLNQLKSNKPLLDLNEIRENFDGSMFECELRLKDHPILRKLVFNEEDYRHRGNRLYSFKTCTIKRIFSLQLLIEWGINGIRKQSEVNIDPVQIFCQVREHVEAEALPRYVPPPTYTEMAS</sequence>
<dbReference type="EMBL" id="ABSV01001693">
    <property type="protein sequence ID" value="EDZ70418.1"/>
    <property type="molecule type" value="Genomic_DNA"/>
</dbReference>
<dbReference type="Proteomes" id="UP000008988">
    <property type="component" value="Unassembled WGS sequence"/>
</dbReference>
<dbReference type="GO" id="GO:0005737">
    <property type="term" value="C:cytoplasm"/>
    <property type="evidence" value="ECO:0007669"/>
    <property type="project" value="UniProtKB-SubCell"/>
</dbReference>
<dbReference type="GO" id="GO:0006897">
    <property type="term" value="P:endocytosis"/>
    <property type="evidence" value="ECO:0007669"/>
    <property type="project" value="UniProtKB-KW"/>
</dbReference>
<dbReference type="CDD" id="cd22952">
    <property type="entry name" value="ART10-like"/>
    <property type="match status" value="1"/>
</dbReference>
<dbReference type="FunFam" id="2.60.40.640:FF:000038">
    <property type="entry name" value="Arrestin-related trafficking adapter 10"/>
    <property type="match status" value="1"/>
</dbReference>
<dbReference type="Gene3D" id="2.60.40.640">
    <property type="match status" value="1"/>
</dbReference>
<dbReference type="InterPro" id="IPR014752">
    <property type="entry name" value="Arrestin-like_C"/>
</dbReference>
<proteinExistence type="inferred from homology"/>
<evidence type="ECO:0000250" key="1"/>
<evidence type="ECO:0000250" key="2">
    <source>
        <dbReference type="UniProtKB" id="P18634"/>
    </source>
</evidence>
<evidence type="ECO:0000305" key="3"/>
<gene>
    <name type="primary">ART10</name>
    <name type="ORF">AWRI1631_124180</name>
</gene>
<feature type="chain" id="PRO_0000402194" description="Arrestin-related trafficking adapter 10">
    <location>
        <begin position="1"/>
        <end position="518"/>
    </location>
</feature>
<feature type="cross-link" description="Glycyl lysine isopeptide (Lys-Gly) (interchain with G-Cter in ubiquitin)" evidence="2">
    <location>
        <position position="118"/>
    </location>
</feature>